<dbReference type="EC" id="2.3.1.40" evidence="1"/>
<dbReference type="EC" id="6.2.1.20" evidence="1"/>
<dbReference type="EMBL" id="CP001138">
    <property type="protein sequence ID" value="ACH48642.1"/>
    <property type="molecule type" value="Genomic_DNA"/>
</dbReference>
<dbReference type="RefSeq" id="WP_000896106.1">
    <property type="nucleotide sequence ID" value="NC_011149.1"/>
</dbReference>
<dbReference type="SMR" id="B5F4V4"/>
<dbReference type="KEGG" id="sea:SeAg_B3157"/>
<dbReference type="HOGENOM" id="CLU_000022_59_8_6"/>
<dbReference type="Proteomes" id="UP000008819">
    <property type="component" value="Chromosome"/>
</dbReference>
<dbReference type="GO" id="GO:0005886">
    <property type="term" value="C:plasma membrane"/>
    <property type="evidence" value="ECO:0007669"/>
    <property type="project" value="UniProtKB-SubCell"/>
</dbReference>
<dbReference type="GO" id="GO:0008779">
    <property type="term" value="F:acyl-[acyl-carrier-protein]-phospholipid O-acyltransferase activity"/>
    <property type="evidence" value="ECO:0007669"/>
    <property type="project" value="UniProtKB-UniRule"/>
</dbReference>
<dbReference type="GO" id="GO:0005524">
    <property type="term" value="F:ATP binding"/>
    <property type="evidence" value="ECO:0007669"/>
    <property type="project" value="UniProtKB-KW"/>
</dbReference>
<dbReference type="GO" id="GO:0008922">
    <property type="term" value="F:long-chain fatty acid [acyl-carrier-protein] ligase activity"/>
    <property type="evidence" value="ECO:0007669"/>
    <property type="project" value="UniProtKB-UniRule"/>
</dbReference>
<dbReference type="GO" id="GO:0031956">
    <property type="term" value="F:medium-chain fatty acid-CoA ligase activity"/>
    <property type="evidence" value="ECO:0007669"/>
    <property type="project" value="TreeGrafter"/>
</dbReference>
<dbReference type="GO" id="GO:0006631">
    <property type="term" value="P:fatty acid metabolic process"/>
    <property type="evidence" value="ECO:0007669"/>
    <property type="project" value="InterPro"/>
</dbReference>
<dbReference type="GO" id="GO:0008654">
    <property type="term" value="P:phospholipid biosynthetic process"/>
    <property type="evidence" value="ECO:0007669"/>
    <property type="project" value="InterPro"/>
</dbReference>
<dbReference type="CDD" id="cd05909">
    <property type="entry name" value="AAS_C"/>
    <property type="match status" value="1"/>
</dbReference>
<dbReference type="CDD" id="cd07989">
    <property type="entry name" value="LPLAT_AGPAT-like"/>
    <property type="match status" value="1"/>
</dbReference>
<dbReference type="FunFam" id="3.30.300.30:FF:000009">
    <property type="entry name" value="Bifunctional protein Aas"/>
    <property type="match status" value="1"/>
</dbReference>
<dbReference type="FunFam" id="3.40.50.12780:FF:000009">
    <property type="entry name" value="Bifunctional protein Aas"/>
    <property type="match status" value="1"/>
</dbReference>
<dbReference type="Gene3D" id="3.30.300.30">
    <property type="match status" value="1"/>
</dbReference>
<dbReference type="Gene3D" id="3.40.50.12780">
    <property type="entry name" value="N-terminal domain of ligase-like"/>
    <property type="match status" value="1"/>
</dbReference>
<dbReference type="HAMAP" id="MF_01162">
    <property type="entry name" value="Aas"/>
    <property type="match status" value="1"/>
</dbReference>
<dbReference type="InterPro" id="IPR023775">
    <property type="entry name" value="Aas"/>
</dbReference>
<dbReference type="InterPro" id="IPR045851">
    <property type="entry name" value="AMP-bd_C_sf"/>
</dbReference>
<dbReference type="InterPro" id="IPR020845">
    <property type="entry name" value="AMP-binding_CS"/>
</dbReference>
<dbReference type="InterPro" id="IPR000873">
    <property type="entry name" value="AMP-dep_synth/lig_dom"/>
</dbReference>
<dbReference type="InterPro" id="IPR042099">
    <property type="entry name" value="ANL_N_sf"/>
</dbReference>
<dbReference type="InterPro" id="IPR002123">
    <property type="entry name" value="Plipid/glycerol_acylTrfase"/>
</dbReference>
<dbReference type="NCBIfam" id="NF005959">
    <property type="entry name" value="PRK08043.1"/>
    <property type="match status" value="1"/>
</dbReference>
<dbReference type="PANTHER" id="PTHR43201">
    <property type="entry name" value="ACYL-COA SYNTHETASE"/>
    <property type="match status" value="1"/>
</dbReference>
<dbReference type="PANTHER" id="PTHR43201:SF5">
    <property type="entry name" value="MEDIUM-CHAIN ACYL-COA LIGASE ACSF2, MITOCHONDRIAL"/>
    <property type="match status" value="1"/>
</dbReference>
<dbReference type="Pfam" id="PF01553">
    <property type="entry name" value="Acyltransferase"/>
    <property type="match status" value="1"/>
</dbReference>
<dbReference type="Pfam" id="PF00501">
    <property type="entry name" value="AMP-binding"/>
    <property type="match status" value="1"/>
</dbReference>
<dbReference type="SMART" id="SM00563">
    <property type="entry name" value="PlsC"/>
    <property type="match status" value="1"/>
</dbReference>
<dbReference type="SUPFAM" id="SSF56801">
    <property type="entry name" value="Acetyl-CoA synthetase-like"/>
    <property type="match status" value="1"/>
</dbReference>
<dbReference type="SUPFAM" id="SSF69593">
    <property type="entry name" value="Glycerol-3-phosphate (1)-acyltransferase"/>
    <property type="match status" value="1"/>
</dbReference>
<dbReference type="PROSITE" id="PS00455">
    <property type="entry name" value="AMP_BINDING"/>
    <property type="match status" value="1"/>
</dbReference>
<feature type="chain" id="PRO_1000137895" description="Bifunctional protein Aas">
    <location>
        <begin position="1"/>
        <end position="719"/>
    </location>
</feature>
<feature type="transmembrane region" description="Helical" evidence="1">
    <location>
        <begin position="258"/>
        <end position="277"/>
    </location>
</feature>
<feature type="transmembrane region" description="Helical" evidence="1">
    <location>
        <begin position="409"/>
        <end position="433"/>
    </location>
</feature>
<feature type="region of interest" description="Acyltransferase">
    <location>
        <begin position="15"/>
        <end position="138"/>
    </location>
</feature>
<feature type="region of interest" description="AMP-binding">
    <location>
        <begin position="233"/>
        <end position="646"/>
    </location>
</feature>
<feature type="active site" evidence="1">
    <location>
        <position position="36"/>
    </location>
</feature>
<proteinExistence type="inferred from homology"/>
<sequence length="719" mass="80492">MLFGFFRNLFRVLYRVRVTGDVRALQGNRVLITPNHVSFIDGMLLALFLPVRPVFAVYTSISQQWYMRWLTPLIDFVPLDPTKPMSIKHLVRLVEQGRPVVIFPEGRISVTGSLMKIYDGAGFVAAKSGATVIPLRIDGAELTPFSRLKGLVKRRLFPRIQLHILPPTQIPMPEAPRARDRRKIAGEMLHQIMMEARMAVRPRETLYESLLAAQYRYGAGKNCIEDINFTPDTYRKLLTKTLFVGRILEKYSVKGEKIGLMLPNAAISAAVIFGAVSRRRIPAMMNYTAGVKGLTSAITAAEIKTIFTSRQFLDKGKLWHLPEQLTQVRWVYLEDLKADVTPADKLWIFAHLLAPRLAQVKQQPEDAAIILFTSGSEGHPKGVVHSHKSILANVEQIKTIADFTANDRFMSALPLFHSFGLTVGLFTPLLTGAEVFLYPSPLHYRIVPELVYDRNCTVLFGTSTFLGNYARFANPYDFYRLRYVVAGAEKLQESTKQLWQDKFGLRILEGYGVTECAPVVSINVPMAAKPGTVGRILPGMDARLLAVPGIENGGRLQLKGPNIMNGYLRVEKPGVLEVPSAENARGETERGWYDTGDIVRFDENGFVQIQGRAKRFAKIAGEMVSLEMVEQLALGVSADKMHATAIKSDASKGEALVLFTTDSELTREKLQHYAREHGIPELAVPRDIRYLKQLPLLGSGKPDFVTLKSWVDAPEQHHE</sequence>
<name>AAS_SALA4</name>
<protein>
    <recommendedName>
        <fullName evidence="1">Bifunctional protein Aas</fullName>
    </recommendedName>
    <domain>
        <recommendedName>
            <fullName evidence="1">2-acylglycerophosphoethanolamine acyltransferase</fullName>
            <ecNumber evidence="1">2.3.1.40</ecNumber>
        </recommendedName>
        <alternativeName>
            <fullName evidence="1">2-acyl-GPE acyltransferase</fullName>
        </alternativeName>
        <alternativeName>
            <fullName evidence="1">Acyl-[acyl-carrier-protein]--phospholipid O-acyltransferase</fullName>
        </alternativeName>
    </domain>
    <domain>
        <recommendedName>
            <fullName evidence="1">Acyl-[acyl-carrier-protein] synthetase</fullName>
            <ecNumber evidence="1">6.2.1.20</ecNumber>
        </recommendedName>
        <alternativeName>
            <fullName evidence="1">Acyl-ACP synthetase</fullName>
        </alternativeName>
        <alternativeName>
            <fullName evidence="1">Long-chain-fatty-acid--[acyl-carrier-protein] ligase</fullName>
        </alternativeName>
    </domain>
</protein>
<organism>
    <name type="scientific">Salmonella agona (strain SL483)</name>
    <dbReference type="NCBI Taxonomy" id="454166"/>
    <lineage>
        <taxon>Bacteria</taxon>
        <taxon>Pseudomonadati</taxon>
        <taxon>Pseudomonadota</taxon>
        <taxon>Gammaproteobacteria</taxon>
        <taxon>Enterobacterales</taxon>
        <taxon>Enterobacteriaceae</taxon>
        <taxon>Salmonella</taxon>
    </lineage>
</organism>
<gene>
    <name evidence="1" type="primary">aas</name>
    <name type="ordered locus">SeAg_B3157</name>
</gene>
<keyword id="KW-0012">Acyltransferase</keyword>
<keyword id="KW-0067">ATP-binding</keyword>
<keyword id="KW-0997">Cell inner membrane</keyword>
<keyword id="KW-1003">Cell membrane</keyword>
<keyword id="KW-0436">Ligase</keyword>
<keyword id="KW-0472">Membrane</keyword>
<keyword id="KW-0511">Multifunctional enzyme</keyword>
<keyword id="KW-0547">Nucleotide-binding</keyword>
<keyword id="KW-0808">Transferase</keyword>
<keyword id="KW-0812">Transmembrane</keyword>
<keyword id="KW-1133">Transmembrane helix</keyword>
<evidence type="ECO:0000255" key="1">
    <source>
        <dbReference type="HAMAP-Rule" id="MF_01162"/>
    </source>
</evidence>
<comment type="function">
    <text evidence="1">Plays a role in lysophospholipid acylation. Transfers fatty acids to the 1-position via an enzyme-bound acyl-ACP intermediate in the presence of ATP and magnesium. Its physiological function is to regenerate phosphatidylethanolamine from 2-acyl-glycero-3-phosphoethanolamine (2-acyl-GPE) formed by transacylation reactions or degradation by phospholipase A1.</text>
</comment>
<comment type="catalytic activity">
    <reaction evidence="1">
        <text>a 2-acyl-sn-glycero-3-phosphoethanolamine + a fatty acyl-[ACP] = a 1,2-diacyl-sn-glycero-3-phosphoethanolamine + holo-[ACP]</text>
        <dbReference type="Rhea" id="RHEA:10304"/>
        <dbReference type="Rhea" id="RHEA-COMP:9685"/>
        <dbReference type="Rhea" id="RHEA-COMP:14125"/>
        <dbReference type="ChEBI" id="CHEBI:64479"/>
        <dbReference type="ChEBI" id="CHEBI:64612"/>
        <dbReference type="ChEBI" id="CHEBI:65213"/>
        <dbReference type="ChEBI" id="CHEBI:138651"/>
        <dbReference type="EC" id="2.3.1.40"/>
    </reaction>
</comment>
<comment type="catalytic activity">
    <reaction evidence="1">
        <text>a long-chain fatty acid + holo-[ACP] + ATP = a long-chain fatty acyl-[ACP] + AMP + diphosphate</text>
        <dbReference type="Rhea" id="RHEA:45588"/>
        <dbReference type="Rhea" id="RHEA-COMP:9685"/>
        <dbReference type="Rhea" id="RHEA-COMP:12682"/>
        <dbReference type="ChEBI" id="CHEBI:30616"/>
        <dbReference type="ChEBI" id="CHEBI:33019"/>
        <dbReference type="ChEBI" id="CHEBI:57560"/>
        <dbReference type="ChEBI" id="CHEBI:64479"/>
        <dbReference type="ChEBI" id="CHEBI:133243"/>
        <dbReference type="ChEBI" id="CHEBI:456215"/>
        <dbReference type="EC" id="6.2.1.20"/>
    </reaction>
</comment>
<comment type="subcellular location">
    <subcellularLocation>
        <location evidence="1">Cell inner membrane</location>
        <topology evidence="1">Multi-pass membrane protein</topology>
    </subcellularLocation>
</comment>
<comment type="similarity">
    <text evidence="1">In the N-terminal section; belongs to the 2-acyl-GPE acetyltransferase family.</text>
</comment>
<comment type="similarity">
    <text evidence="1">In the C-terminal section; belongs to the ATP-dependent AMP-binding enzyme family.</text>
</comment>
<accession>B5F4V4</accession>
<reference key="1">
    <citation type="journal article" date="2011" name="J. Bacteriol.">
        <title>Comparative genomics of 28 Salmonella enterica isolates: evidence for CRISPR-mediated adaptive sublineage evolution.</title>
        <authorList>
            <person name="Fricke W.F."/>
            <person name="Mammel M.K."/>
            <person name="McDermott P.F."/>
            <person name="Tartera C."/>
            <person name="White D.G."/>
            <person name="Leclerc J.E."/>
            <person name="Ravel J."/>
            <person name="Cebula T.A."/>
        </authorList>
    </citation>
    <scope>NUCLEOTIDE SEQUENCE [LARGE SCALE GENOMIC DNA]</scope>
    <source>
        <strain>SL483</strain>
    </source>
</reference>